<protein>
    <recommendedName>
        <fullName evidence="3">Type II restriction enzyme PvuII</fullName>
        <shortName>R.PvuII</shortName>
        <ecNumber>3.1.21.4</ecNumber>
    </recommendedName>
    <alternativeName>
        <fullName>Endonuclease PvuII</fullName>
    </alternativeName>
    <alternativeName>
        <fullName>Type-2 restriction enzyme PvuII</fullName>
    </alternativeName>
</protein>
<dbReference type="EC" id="3.1.21.4"/>
<dbReference type="EMBL" id="X52681">
    <property type="protein sequence ID" value="CAA36904.1"/>
    <property type="molecule type" value="Genomic_DNA"/>
</dbReference>
<dbReference type="EMBL" id="AF305615">
    <property type="protein sequence ID" value="AAA96334.1"/>
    <property type="molecule type" value="Genomic_DNA"/>
</dbReference>
<dbReference type="PIR" id="S12163">
    <property type="entry name" value="S12163"/>
</dbReference>
<dbReference type="RefSeq" id="WP_010904455.1">
    <property type="nucleotide sequence ID" value="NZ_PGWU01000024.1"/>
</dbReference>
<dbReference type="PDB" id="1EYU">
    <property type="method" value="X-ray"/>
    <property type="resolution" value="1.78 A"/>
    <property type="chains" value="A/B=1-157"/>
</dbReference>
<dbReference type="PDB" id="1F0O">
    <property type="method" value="X-ray"/>
    <property type="resolution" value="2.50 A"/>
    <property type="chains" value="A/B=1-157"/>
</dbReference>
<dbReference type="PDB" id="1H56">
    <property type="method" value="X-ray"/>
    <property type="resolution" value="3.00 A"/>
    <property type="chains" value="A/B=2-157"/>
</dbReference>
<dbReference type="PDB" id="1K0Z">
    <property type="method" value="X-ray"/>
    <property type="resolution" value="2.05 A"/>
    <property type="chains" value="A/B=2-157"/>
</dbReference>
<dbReference type="PDB" id="1NI0">
    <property type="method" value="X-ray"/>
    <property type="resolution" value="2.50 A"/>
    <property type="chains" value="A/B/C=1-157"/>
</dbReference>
<dbReference type="PDB" id="1PVI">
    <property type="method" value="X-ray"/>
    <property type="resolution" value="2.60 A"/>
    <property type="chains" value="A/B=1-157"/>
</dbReference>
<dbReference type="PDB" id="1PVU">
    <property type="method" value="X-ray"/>
    <property type="resolution" value="2.40 A"/>
    <property type="chains" value="A/B=2-157"/>
</dbReference>
<dbReference type="PDB" id="2PVI">
    <property type="method" value="X-ray"/>
    <property type="resolution" value="1.76 A"/>
    <property type="chains" value="A/B=1-157"/>
</dbReference>
<dbReference type="PDB" id="3KSK">
    <property type="method" value="X-ray"/>
    <property type="resolution" value="2.35 A"/>
    <property type="chains" value="A/B=2-157"/>
</dbReference>
<dbReference type="PDB" id="3PVI">
    <property type="method" value="X-ray"/>
    <property type="resolution" value="1.59 A"/>
    <property type="chains" value="A/B=1-157"/>
</dbReference>
<dbReference type="PDBsum" id="1EYU"/>
<dbReference type="PDBsum" id="1F0O"/>
<dbReference type="PDBsum" id="1H56"/>
<dbReference type="PDBsum" id="1K0Z"/>
<dbReference type="PDBsum" id="1NI0"/>
<dbReference type="PDBsum" id="1PVI"/>
<dbReference type="PDBsum" id="1PVU"/>
<dbReference type="PDBsum" id="2PVI"/>
<dbReference type="PDBsum" id="3KSK"/>
<dbReference type="PDBsum" id="3PVI"/>
<dbReference type="SMR" id="P23657"/>
<dbReference type="OrthoDB" id="9814553at2"/>
<dbReference type="BRENDA" id="3.1.21.4">
    <property type="organism ID" value="14542"/>
</dbReference>
<dbReference type="EvolutionaryTrace" id="P23657"/>
<dbReference type="PRO" id="PR:P23657"/>
<dbReference type="GO" id="GO:0003677">
    <property type="term" value="F:DNA binding"/>
    <property type="evidence" value="ECO:0007669"/>
    <property type="project" value="UniProtKB-KW"/>
</dbReference>
<dbReference type="GO" id="GO:0046872">
    <property type="term" value="F:metal ion binding"/>
    <property type="evidence" value="ECO:0007669"/>
    <property type="project" value="UniProtKB-KW"/>
</dbReference>
<dbReference type="GO" id="GO:0009036">
    <property type="term" value="F:type II site-specific deoxyribonuclease activity"/>
    <property type="evidence" value="ECO:0007669"/>
    <property type="project" value="UniProtKB-EC"/>
</dbReference>
<dbReference type="GO" id="GO:0009307">
    <property type="term" value="P:DNA restriction-modification system"/>
    <property type="evidence" value="ECO:0007669"/>
    <property type="project" value="UniProtKB-KW"/>
</dbReference>
<dbReference type="CDD" id="cd22351">
    <property type="entry name" value="PvuII-like"/>
    <property type="match status" value="1"/>
</dbReference>
<dbReference type="Gene3D" id="3.40.210.10">
    <property type="entry name" value="PVUII Endonuclease, subunit A"/>
    <property type="match status" value="1"/>
</dbReference>
<dbReference type="InterPro" id="IPR038402">
    <property type="entry name" value="PvuII_sf"/>
</dbReference>
<dbReference type="InterPro" id="IPR011335">
    <property type="entry name" value="Restrct_endonuc-II-like"/>
</dbReference>
<dbReference type="InterPro" id="IPR015306">
    <property type="entry name" value="Restrct_endonuc_II_PvuII"/>
</dbReference>
<dbReference type="Pfam" id="PF09225">
    <property type="entry name" value="Endonuc-PvuII"/>
    <property type="match status" value="1"/>
</dbReference>
<dbReference type="SUPFAM" id="SSF52980">
    <property type="entry name" value="Restriction endonuclease-like"/>
    <property type="match status" value="1"/>
</dbReference>
<organism>
    <name type="scientific">Proteus hauseri</name>
    <dbReference type="NCBI Taxonomy" id="183417"/>
    <lineage>
        <taxon>Bacteria</taxon>
        <taxon>Pseudomonadati</taxon>
        <taxon>Pseudomonadota</taxon>
        <taxon>Gammaproteobacteria</taxon>
        <taxon>Enterobacterales</taxon>
        <taxon>Morganellaceae</taxon>
        <taxon>Proteus</taxon>
    </lineage>
</organism>
<accession>P23657</accession>
<feature type="chain" id="PRO_0000077356" description="Type II restriction enzyme PvuII">
    <location>
        <begin position="1"/>
        <end position="157"/>
    </location>
</feature>
<feature type="binding site" evidence="1">
    <location>
        <position position="58"/>
    </location>
    <ligand>
        <name>Mg(2+)</name>
        <dbReference type="ChEBI" id="CHEBI:18420"/>
        <label>1</label>
    </ligand>
</feature>
<feature type="binding site" evidence="1">
    <location>
        <position position="58"/>
    </location>
    <ligand>
        <name>Mg(2+)</name>
        <dbReference type="ChEBI" id="CHEBI:18420"/>
        <label>2</label>
    </ligand>
</feature>
<feature type="binding site" evidence="1">
    <location>
        <position position="68"/>
    </location>
    <ligand>
        <name>Mg(2+)</name>
        <dbReference type="ChEBI" id="CHEBI:18420"/>
        <label>1</label>
    </ligand>
</feature>
<feature type="helix" evidence="6">
    <location>
        <begin position="6"/>
        <end position="25"/>
    </location>
</feature>
<feature type="turn" evidence="4">
    <location>
        <begin position="31"/>
        <end position="33"/>
    </location>
</feature>
<feature type="helix" evidence="6">
    <location>
        <begin position="36"/>
        <end position="46"/>
    </location>
</feature>
<feature type="strand" evidence="6">
    <location>
        <begin position="55"/>
        <end position="57"/>
    </location>
</feature>
<feature type="strand" evidence="5">
    <location>
        <begin position="58"/>
        <end position="60"/>
    </location>
</feature>
<feature type="strand" evidence="6">
    <location>
        <begin position="66"/>
        <end position="73"/>
    </location>
</feature>
<feature type="turn" evidence="6">
    <location>
        <begin position="74"/>
        <end position="76"/>
    </location>
</feature>
<feature type="strand" evidence="6">
    <location>
        <begin position="78"/>
        <end position="80"/>
    </location>
</feature>
<feature type="strand" evidence="4">
    <location>
        <begin position="84"/>
        <end position="86"/>
    </location>
</feature>
<feature type="helix" evidence="6">
    <location>
        <begin position="88"/>
        <end position="95"/>
    </location>
</feature>
<feature type="strand" evidence="6">
    <location>
        <begin position="99"/>
        <end position="105"/>
    </location>
</feature>
<feature type="strand" evidence="6">
    <location>
        <begin position="108"/>
        <end position="115"/>
    </location>
</feature>
<feature type="helix" evidence="6">
    <location>
        <begin position="117"/>
        <end position="133"/>
    </location>
</feature>
<feature type="strand" evidence="5">
    <location>
        <begin position="139"/>
        <end position="141"/>
    </location>
</feature>
<feature type="helix" evidence="6">
    <location>
        <begin position="146"/>
        <end position="152"/>
    </location>
</feature>
<feature type="strand" evidence="6">
    <location>
        <begin position="153"/>
        <end position="155"/>
    </location>
</feature>
<reference key="1">
    <citation type="journal article" date="1990" name="Nucleic Acids Res.">
        <title>Complete nucleotide sequence of the PvuII restriction enzyme gene from Proteus vulgaris.</title>
        <authorList>
            <person name="Athanasiadis A."/>
            <person name="Gregoriu M."/>
            <person name="Thanos D."/>
            <person name="Kokkinidis M."/>
            <person name="Papamatheakis J."/>
        </authorList>
    </citation>
    <scope>NUCLEOTIDE SEQUENCE [GENOMIC DNA]</scope>
    <source>
        <strain>ATCC 13315 / DSM 30118 / JCM 1668 / NBRC 3851 / NCIMB 4175 / NCTC 4175 / NRRL B-3405</strain>
    </source>
</reference>
<reference key="2">
    <citation type="journal article" date="2003" name="Nucleic Acids Res.">
        <title>A nomenclature for restriction enzymes, DNA methyltransferases, homing endonucleases and their genes.</title>
        <authorList>
            <person name="Roberts R.J."/>
            <person name="Belfort M."/>
            <person name="Bestor T."/>
            <person name="Bhagwat A.S."/>
            <person name="Bickle T.A."/>
            <person name="Bitinaite J."/>
            <person name="Blumenthal R.M."/>
            <person name="Degtyarev S.K."/>
            <person name="Dryden D.T."/>
            <person name="Dybvig K."/>
            <person name="Firman K."/>
            <person name="Gromova E.S."/>
            <person name="Gumport R.I."/>
            <person name="Halford S.E."/>
            <person name="Hattman S."/>
            <person name="Heitman J."/>
            <person name="Hornby D.P."/>
            <person name="Janulaitis A."/>
            <person name="Jeltsch A."/>
            <person name="Josephsen J."/>
            <person name="Kiss A."/>
            <person name="Klaenhammer T.R."/>
            <person name="Kobayashi I."/>
            <person name="Kong H."/>
            <person name="Krueger D.H."/>
            <person name="Lacks S."/>
            <person name="Marinus M.G."/>
            <person name="Miyahara M."/>
            <person name="Morgan R.D."/>
            <person name="Murray N.E."/>
            <person name="Nagaraja V."/>
            <person name="Piekarowicz A."/>
            <person name="Pingoud A."/>
            <person name="Raleigh E."/>
            <person name="Rao D.N."/>
            <person name="Reich N."/>
            <person name="Repin V.E."/>
            <person name="Selker E.U."/>
            <person name="Shaw P.C."/>
            <person name="Stein D.C."/>
            <person name="Stoddard B.L."/>
            <person name="Szybalski W."/>
            <person name="Trautner T.A."/>
            <person name="Van Etten J.L."/>
            <person name="Vitor J.M."/>
            <person name="Wilson G.G."/>
            <person name="Xu S.Y."/>
        </authorList>
    </citation>
    <scope>NOMENCLATURE</scope>
    <scope>SUBTYPE</scope>
</reference>
<reference key="3">
    <citation type="journal article" date="1994" name="EMBO J.">
        <title>Structure of PvuII endonuclease with cognate DNA.</title>
        <authorList>
            <person name="Cheng X."/>
            <person name="Balendiran K."/>
            <person name="Schildkraut I."/>
            <person name="Anderson J.E."/>
        </authorList>
    </citation>
    <scope>X-RAY CRYSTALLOGRAPHY (3.0 ANGSTROMS)</scope>
    <scope>SUBUNIT</scope>
    <scope>DNA-BINDING</scope>
</reference>
<reference key="4">
    <citation type="journal article" date="1994" name="Nat. Struct. Biol.">
        <title>Crystal structure of PvuII endonuclease reveals extensive structural homologies to EcoRV.</title>
        <authorList>
            <person name="Athanasiadis A."/>
            <person name="Vlassi M."/>
            <person name="Kotsifaki D."/>
            <person name="Tucker P.A."/>
            <person name="Wilson K.S."/>
            <person name="Kokkinidis M."/>
        </authorList>
    </citation>
    <scope>X-RAY CRYSTALLOGRAPHY (2.4 ANGSTROMS)</scope>
</reference>
<reference key="5">
    <citation type="journal article" date="1998" name="Biol. Chem.">
        <title>How is modification of the DNA substrate recognized by the PvuII restriction endonuclease?</title>
        <authorList>
            <person name="Horton J.R."/>
            <person name="Bonventre J."/>
            <person name="Cheng X."/>
        </authorList>
    </citation>
    <scope>X-RAY CRYSTALLOGRAPHY (1.76 ANGSTROMS)</scope>
</reference>
<reference key="6">
    <citation type="journal article" date="1998" name="J. Mol. Biol.">
        <title>Asp34 of PvuII endonuclease is directly involved in DNA minor groove recognition and indirectly involved in catalysis.</title>
        <authorList>
            <person name="Horton J.R."/>
            <person name="Nastri H.G."/>
            <person name="Riggs P.D."/>
            <person name="Cheng X."/>
        </authorList>
    </citation>
    <scope>X-RAY CRYSTALLOGRAPHY (1.59 ANGSTROMS)</scope>
</reference>
<gene>
    <name type="primary">pvuIIR</name>
</gene>
<proteinExistence type="evidence at protein level"/>
<sequence>MSHPDLNKLLELWPHIQEYQDLALKHGINDIFQDNGGKLLQVLLITGLTVLPGREGNDAVDNAGQEYELKSINIDLTKGFSTHHHMNPVIIAKYRQVPWIFAIYRGIAIEAIYRLEPKDLEFYYDKWERKWYSDGHKDINNPKIPVKYVMEHGTKIY</sequence>
<evidence type="ECO:0000250" key="1"/>
<evidence type="ECO:0000269" key="2">
    <source>
    </source>
</evidence>
<evidence type="ECO:0000303" key="3">
    <source>
    </source>
</evidence>
<evidence type="ECO:0007829" key="4">
    <source>
        <dbReference type="PDB" id="1PVU"/>
    </source>
</evidence>
<evidence type="ECO:0007829" key="5">
    <source>
        <dbReference type="PDB" id="3KSK"/>
    </source>
</evidence>
<evidence type="ECO:0007829" key="6">
    <source>
        <dbReference type="PDB" id="3PVI"/>
    </source>
</evidence>
<name>T2P2_PROHU</name>
<comment type="function">
    <text evidence="3">A P subtype restriction enzyme that recognizes the double-stranded sequence 5'-CAGCTG-3' and cleaves after G-3.</text>
</comment>
<comment type="catalytic activity">
    <reaction>
        <text>Endonucleolytic cleavage of DNA to give specific double-stranded fragments with terminal 5'-phosphates.</text>
        <dbReference type="EC" id="3.1.21.4"/>
    </reaction>
</comment>
<comment type="cofactor">
    <cofactor>
        <name>Mg(2+)</name>
        <dbReference type="ChEBI" id="CHEBI:18420"/>
    </cofactor>
    <text>Binds 2 magnesium ions per subunit.</text>
</comment>
<comment type="subunit">
    <text evidence="2">Homodimer.</text>
</comment>
<keyword id="KW-0002">3D-structure</keyword>
<keyword id="KW-0238">DNA-binding</keyword>
<keyword id="KW-0255">Endonuclease</keyword>
<keyword id="KW-0378">Hydrolase</keyword>
<keyword id="KW-0460">Magnesium</keyword>
<keyword id="KW-0479">Metal-binding</keyword>
<keyword id="KW-0540">Nuclease</keyword>
<keyword id="KW-0680">Restriction system</keyword>